<proteinExistence type="inferred from homology"/>
<accession>A6US29</accession>
<evidence type="ECO:0000255" key="1">
    <source>
        <dbReference type="HAMAP-Rule" id="MF_01014"/>
    </source>
</evidence>
<protein>
    <recommendedName>
        <fullName evidence="1">1-(5-phosphoribosyl)-5-[(5-phosphoribosylamino)methylideneamino] imidazole-4-carboxamide isomerase</fullName>
        <ecNumber evidence="1">5.3.1.16</ecNumber>
    </recommendedName>
    <alternativeName>
        <fullName evidence="1">Phosphoribosylformimino-5-aminoimidazole carboxamide ribotide isomerase</fullName>
    </alternativeName>
</protein>
<feature type="chain" id="PRO_1000063220" description="1-(5-phosphoribosyl)-5-[(5-phosphoribosylamino)methylideneamino] imidazole-4-carboxamide isomerase">
    <location>
        <begin position="1"/>
        <end position="238"/>
    </location>
</feature>
<feature type="active site" description="Proton acceptor" evidence="1">
    <location>
        <position position="8"/>
    </location>
</feature>
<feature type="active site" description="Proton donor" evidence="1">
    <location>
        <position position="130"/>
    </location>
</feature>
<sequence length="238" mass="25725">MLIIPAVDMKNKKCVQLIQGNPDKKHVELDNPPEIAKKWVEQGAEMLHLVDLDGAINGKRVNDEFIEEIIKNSGVPVQIGGGIRSVSDALYFIEKGAEKVILGTVAIQNPKIVREISSIVGKEKVTVALDAKDGKVLIKGWTEKTDYSPVQIGKILENMGAGSILFTNVDSEGLLEGINVLPTKELVDNLNIPIIASGGVTTVEDLLKFKEIGVYAVVVGSALYKDMINLKDAILASK</sequence>
<name>HIS4_METVS</name>
<organism>
    <name type="scientific">Methanococcus vannielii (strain ATCC 35089 / DSM 1224 / JCM 13029 / OCM 148 / SB)</name>
    <dbReference type="NCBI Taxonomy" id="406327"/>
    <lineage>
        <taxon>Archaea</taxon>
        <taxon>Methanobacteriati</taxon>
        <taxon>Methanobacteriota</taxon>
        <taxon>Methanomada group</taxon>
        <taxon>Methanococci</taxon>
        <taxon>Methanococcales</taxon>
        <taxon>Methanococcaceae</taxon>
        <taxon>Methanococcus</taxon>
    </lineage>
</organism>
<reference key="1">
    <citation type="submission" date="2007-06" db="EMBL/GenBank/DDBJ databases">
        <title>Complete sequence of Methanococcus vannielii SB.</title>
        <authorList>
            <consortium name="US DOE Joint Genome Institute"/>
            <person name="Copeland A."/>
            <person name="Lucas S."/>
            <person name="Lapidus A."/>
            <person name="Barry K."/>
            <person name="Glavina del Rio T."/>
            <person name="Dalin E."/>
            <person name="Tice H."/>
            <person name="Pitluck S."/>
            <person name="Chain P."/>
            <person name="Malfatti S."/>
            <person name="Shin M."/>
            <person name="Vergez L."/>
            <person name="Schmutz J."/>
            <person name="Larimer F."/>
            <person name="Land M."/>
            <person name="Hauser L."/>
            <person name="Kyrpides N."/>
            <person name="Anderson I."/>
            <person name="Sieprawska-Lupa M."/>
            <person name="Whitman W.B."/>
            <person name="Richardson P."/>
        </authorList>
    </citation>
    <scope>NUCLEOTIDE SEQUENCE [LARGE SCALE GENOMIC DNA]</scope>
    <source>
        <strain>ATCC 35089 / DSM 1224 / JCM 13029 / OCM 148 / SB</strain>
    </source>
</reference>
<keyword id="KW-0028">Amino-acid biosynthesis</keyword>
<keyword id="KW-0963">Cytoplasm</keyword>
<keyword id="KW-0368">Histidine biosynthesis</keyword>
<keyword id="KW-0413">Isomerase</keyword>
<dbReference type="EC" id="5.3.1.16" evidence="1"/>
<dbReference type="EMBL" id="CP000742">
    <property type="protein sequence ID" value="ABR55301.1"/>
    <property type="molecule type" value="Genomic_DNA"/>
</dbReference>
<dbReference type="RefSeq" id="WP_012066215.1">
    <property type="nucleotide sequence ID" value="NC_009634.1"/>
</dbReference>
<dbReference type="SMR" id="A6US29"/>
<dbReference type="STRING" id="406327.Mevan_1405"/>
<dbReference type="GeneID" id="5325136"/>
<dbReference type="KEGG" id="mvn:Mevan_1405"/>
<dbReference type="eggNOG" id="arCOG00618">
    <property type="taxonomic scope" value="Archaea"/>
</dbReference>
<dbReference type="HOGENOM" id="CLU_048577_1_1_2"/>
<dbReference type="OrthoDB" id="52866at2157"/>
<dbReference type="UniPathway" id="UPA00031">
    <property type="reaction ID" value="UER00009"/>
</dbReference>
<dbReference type="Proteomes" id="UP000001107">
    <property type="component" value="Chromosome"/>
</dbReference>
<dbReference type="GO" id="GO:0005737">
    <property type="term" value="C:cytoplasm"/>
    <property type="evidence" value="ECO:0007669"/>
    <property type="project" value="UniProtKB-SubCell"/>
</dbReference>
<dbReference type="GO" id="GO:0003949">
    <property type="term" value="F:1-(5-phosphoribosyl)-5-[(5-phosphoribosylamino)methylideneamino]imidazole-4-carboxamide isomerase activity"/>
    <property type="evidence" value="ECO:0007669"/>
    <property type="project" value="UniProtKB-UniRule"/>
</dbReference>
<dbReference type="GO" id="GO:0000105">
    <property type="term" value="P:L-histidine biosynthetic process"/>
    <property type="evidence" value="ECO:0007669"/>
    <property type="project" value="UniProtKB-UniRule"/>
</dbReference>
<dbReference type="GO" id="GO:0000162">
    <property type="term" value="P:L-tryptophan biosynthetic process"/>
    <property type="evidence" value="ECO:0007669"/>
    <property type="project" value="TreeGrafter"/>
</dbReference>
<dbReference type="CDD" id="cd04732">
    <property type="entry name" value="HisA"/>
    <property type="match status" value="1"/>
</dbReference>
<dbReference type="FunFam" id="3.20.20.70:FF:000009">
    <property type="entry name" value="1-(5-phosphoribosyl)-5-[(5-phosphoribosylamino)methylideneamino] imidazole-4-carboxamide isomerase"/>
    <property type="match status" value="1"/>
</dbReference>
<dbReference type="Gene3D" id="3.20.20.70">
    <property type="entry name" value="Aldolase class I"/>
    <property type="match status" value="1"/>
</dbReference>
<dbReference type="HAMAP" id="MF_01014">
    <property type="entry name" value="HisA"/>
    <property type="match status" value="1"/>
</dbReference>
<dbReference type="InterPro" id="IPR013785">
    <property type="entry name" value="Aldolase_TIM"/>
</dbReference>
<dbReference type="InterPro" id="IPR006062">
    <property type="entry name" value="His_biosynth"/>
</dbReference>
<dbReference type="InterPro" id="IPR006063">
    <property type="entry name" value="HisA_bact_arch"/>
</dbReference>
<dbReference type="InterPro" id="IPR044524">
    <property type="entry name" value="Isoase_HisA-like"/>
</dbReference>
<dbReference type="InterPro" id="IPR023016">
    <property type="entry name" value="Isoase_HisA-like_bact"/>
</dbReference>
<dbReference type="InterPro" id="IPR011060">
    <property type="entry name" value="RibuloseP-bd_barrel"/>
</dbReference>
<dbReference type="NCBIfam" id="TIGR00007">
    <property type="entry name" value="1-(5-phosphoribosyl)-5-[(5-phosphoribosylamino)methylideneamino]imidazole-4-carboxamide isomerase"/>
    <property type="match status" value="1"/>
</dbReference>
<dbReference type="NCBIfam" id="NF010112">
    <property type="entry name" value="PRK13585.1"/>
    <property type="match status" value="1"/>
</dbReference>
<dbReference type="PANTHER" id="PTHR43090">
    <property type="entry name" value="1-(5-PHOSPHORIBOSYL)-5-[(5-PHOSPHORIBOSYLAMINO)METHYLIDENEAMINO] IMIDAZOLE-4-CARBOXAMIDE ISOMERASE"/>
    <property type="match status" value="1"/>
</dbReference>
<dbReference type="PANTHER" id="PTHR43090:SF7">
    <property type="entry name" value="1-(5-PHOSPHORIBOSYL)-5-[(5-PHOSPHORIBOSYLAMINO)METHYLIDENEAMINO] IMIDAZOLE-4-CARBOXAMIDE ISOMERASE"/>
    <property type="match status" value="1"/>
</dbReference>
<dbReference type="Pfam" id="PF00977">
    <property type="entry name" value="His_biosynth"/>
    <property type="match status" value="1"/>
</dbReference>
<dbReference type="SUPFAM" id="SSF51366">
    <property type="entry name" value="Ribulose-phoshate binding barrel"/>
    <property type="match status" value="1"/>
</dbReference>
<gene>
    <name evidence="1" type="primary">hisA</name>
    <name type="ordered locus">Mevan_1405</name>
</gene>
<comment type="catalytic activity">
    <reaction evidence="1">
        <text>1-(5-phospho-beta-D-ribosyl)-5-[(5-phospho-beta-D-ribosylamino)methylideneamino]imidazole-4-carboxamide = 5-[(5-phospho-1-deoxy-D-ribulos-1-ylimino)methylamino]-1-(5-phospho-beta-D-ribosyl)imidazole-4-carboxamide</text>
        <dbReference type="Rhea" id="RHEA:15469"/>
        <dbReference type="ChEBI" id="CHEBI:58435"/>
        <dbReference type="ChEBI" id="CHEBI:58525"/>
        <dbReference type="EC" id="5.3.1.16"/>
    </reaction>
</comment>
<comment type="pathway">
    <text evidence="1">Amino-acid biosynthesis; L-histidine biosynthesis; L-histidine from 5-phospho-alpha-D-ribose 1-diphosphate: step 4/9.</text>
</comment>
<comment type="subcellular location">
    <subcellularLocation>
        <location evidence="1">Cytoplasm</location>
    </subcellularLocation>
</comment>
<comment type="similarity">
    <text evidence="1">Belongs to the HisA/HisF family.</text>
</comment>